<dbReference type="EC" id="4.4.1.14"/>
<dbReference type="EMBL" id="AF160183">
    <property type="protein sequence ID" value="AAD48074.1"/>
    <property type="molecule type" value="Genomic_DNA"/>
</dbReference>
<dbReference type="EMBL" id="AL161509">
    <property type="protein sequence ID" value="CAB81141.1"/>
    <property type="molecule type" value="Genomic_DNA"/>
</dbReference>
<dbReference type="EMBL" id="CP002687">
    <property type="protein sequence ID" value="AEE82593.1"/>
    <property type="molecule type" value="Genomic_DNA"/>
</dbReference>
<dbReference type="EMBL" id="AF332405">
    <property type="protein sequence ID" value="AAG48768.1"/>
    <property type="molecule type" value="mRNA"/>
</dbReference>
<dbReference type="PIR" id="B85079">
    <property type="entry name" value="B85079"/>
</dbReference>
<dbReference type="RefSeq" id="NP_567330.1">
    <property type="nucleotide sequence ID" value="NM_116873.2"/>
</dbReference>
<dbReference type="SMR" id="Q9S9U6"/>
<dbReference type="BioGRID" id="11617">
    <property type="interactions" value="1"/>
</dbReference>
<dbReference type="FunCoup" id="Q9S9U6">
    <property type="interactions" value="238"/>
</dbReference>
<dbReference type="IntAct" id="Q9S9U6">
    <property type="interactions" value="1"/>
</dbReference>
<dbReference type="STRING" id="3702.Q9S9U6"/>
<dbReference type="PaxDb" id="3702-AT4G08040.1"/>
<dbReference type="EnsemblPlants" id="AT4G08040.1">
    <property type="protein sequence ID" value="AT4G08040.1"/>
    <property type="gene ID" value="AT4G08040"/>
</dbReference>
<dbReference type="GeneID" id="826317"/>
<dbReference type="Gramene" id="AT4G08040.1">
    <property type="protein sequence ID" value="AT4G08040.1"/>
    <property type="gene ID" value="AT4G08040"/>
</dbReference>
<dbReference type="KEGG" id="ath:AT4G08040"/>
<dbReference type="Araport" id="AT4G08040"/>
<dbReference type="TAIR" id="AT4G08040">
    <property type="gene designation" value="ACS11"/>
</dbReference>
<dbReference type="eggNOG" id="KOG0256">
    <property type="taxonomic scope" value="Eukaryota"/>
</dbReference>
<dbReference type="HOGENOM" id="CLU_017584_1_0_1"/>
<dbReference type="InParanoid" id="Q9S9U6"/>
<dbReference type="OMA" id="NPQGRCY"/>
<dbReference type="PhylomeDB" id="Q9S9U6"/>
<dbReference type="SABIO-RK" id="Q9S9U6"/>
<dbReference type="UniPathway" id="UPA00384">
    <property type="reaction ID" value="UER00562"/>
</dbReference>
<dbReference type="PRO" id="PR:Q9S9U6"/>
<dbReference type="Proteomes" id="UP000006548">
    <property type="component" value="Chromosome 4"/>
</dbReference>
<dbReference type="ExpressionAtlas" id="Q9S9U6">
    <property type="expression patterns" value="baseline and differential"/>
</dbReference>
<dbReference type="GO" id="GO:0016847">
    <property type="term" value="F:1-aminocyclopropane-1-carboxylate synthase activity"/>
    <property type="evidence" value="ECO:0000314"/>
    <property type="project" value="TAIR"/>
</dbReference>
<dbReference type="GO" id="GO:0030170">
    <property type="term" value="F:pyridoxal phosphate binding"/>
    <property type="evidence" value="ECO:0007669"/>
    <property type="project" value="InterPro"/>
</dbReference>
<dbReference type="GO" id="GO:0009693">
    <property type="term" value="P:ethylene biosynthetic process"/>
    <property type="evidence" value="ECO:0007669"/>
    <property type="project" value="UniProtKB-UniPathway"/>
</dbReference>
<dbReference type="GO" id="GO:0009835">
    <property type="term" value="P:fruit ripening"/>
    <property type="evidence" value="ECO:0007669"/>
    <property type="project" value="UniProtKB-KW"/>
</dbReference>
<dbReference type="CDD" id="cd00609">
    <property type="entry name" value="AAT_like"/>
    <property type="match status" value="1"/>
</dbReference>
<dbReference type="FunFam" id="3.90.1150.10:FF:000038">
    <property type="entry name" value="1-aminocyclopropane-1-carboxylate synthase 2"/>
    <property type="match status" value="1"/>
</dbReference>
<dbReference type="FunFam" id="3.40.640.10:FF:000051">
    <property type="entry name" value="1-aminocyclopropane-1-carboxylate synthase 3"/>
    <property type="match status" value="1"/>
</dbReference>
<dbReference type="Gene3D" id="3.90.1150.10">
    <property type="entry name" value="Aspartate Aminotransferase, domain 1"/>
    <property type="match status" value="1"/>
</dbReference>
<dbReference type="Gene3D" id="3.40.640.10">
    <property type="entry name" value="Type I PLP-dependent aspartate aminotransferase-like (Major domain)"/>
    <property type="match status" value="1"/>
</dbReference>
<dbReference type="InterPro" id="IPR004839">
    <property type="entry name" value="Aminotransferase_I/II_large"/>
</dbReference>
<dbReference type="InterPro" id="IPR050478">
    <property type="entry name" value="Ethylene_sulfur-biosynth"/>
</dbReference>
<dbReference type="InterPro" id="IPR004838">
    <property type="entry name" value="NHTrfase_class1_PyrdxlP-BS"/>
</dbReference>
<dbReference type="InterPro" id="IPR015424">
    <property type="entry name" value="PyrdxlP-dep_Trfase"/>
</dbReference>
<dbReference type="InterPro" id="IPR015421">
    <property type="entry name" value="PyrdxlP-dep_Trfase_major"/>
</dbReference>
<dbReference type="InterPro" id="IPR015422">
    <property type="entry name" value="PyrdxlP-dep_Trfase_small"/>
</dbReference>
<dbReference type="PANTHER" id="PTHR43795:SF114">
    <property type="entry name" value="1-AMINOCYCLOPROPANE-1-CARBOXYLATE SYNTHASE 11"/>
    <property type="match status" value="1"/>
</dbReference>
<dbReference type="PANTHER" id="PTHR43795">
    <property type="entry name" value="BIFUNCTIONAL ASPARTATE AMINOTRANSFERASE AND GLUTAMATE/ASPARTATE-PREPHENATE AMINOTRANSFERASE-RELATED"/>
    <property type="match status" value="1"/>
</dbReference>
<dbReference type="Pfam" id="PF00155">
    <property type="entry name" value="Aminotran_1_2"/>
    <property type="match status" value="1"/>
</dbReference>
<dbReference type="PRINTS" id="PR00753">
    <property type="entry name" value="ACCSYNTHASE"/>
</dbReference>
<dbReference type="SUPFAM" id="SSF53383">
    <property type="entry name" value="PLP-dependent transferases"/>
    <property type="match status" value="1"/>
</dbReference>
<dbReference type="PROSITE" id="PS00105">
    <property type="entry name" value="AA_TRANSFER_CLASS_1"/>
    <property type="match status" value="1"/>
</dbReference>
<sequence>MLSSKVVGDSHGQDSSYFLGWQEYEKNPFHESFNTSGIVQMGLAENQLSFDLIEKWLEEHPEVLGLKKNDESVFRQLALFQDYHGLPAFKDAMAKFMGKIRENKVKFDTNKMVLTAGSTSANETLMFCLANPGDAFLIPAPYYPGFDRDLKWRTGVEIVPIHCVSSNGYKITEDALEDAYERALKHNLNVKGVLITNPSNPLGTSTTREELDLLLTFTSTKKIHMVSDEIYSGTVFDSPEFTSVLEVAKDKNMGLDGKIHVVYSLSKDLGLPGFRVGLIYSNNEKVVSAATKMSSFGLISSQTQHLLANLLSDERFTTNYLEENKKRLRERKDRLVSGLKEAGISCLKSNAGLFCWVDLRHLLKSNTFEAEHSLWTKIVCEVGLNISPGSSCHCDEPGWFRVCFANMSDQTMEVAMDRVKGFVDNNNGGKQKRTMWDTRRRSLINKWVSKLSSVTCESER</sequence>
<reference key="1">
    <citation type="journal article" date="1999" name="Nature">
        <title>Sequence and analysis of chromosome 4 of the plant Arabidopsis thaliana.</title>
        <authorList>
            <person name="Mayer K.F.X."/>
            <person name="Schueller C."/>
            <person name="Wambutt R."/>
            <person name="Murphy G."/>
            <person name="Volckaert G."/>
            <person name="Pohl T."/>
            <person name="Duesterhoeft A."/>
            <person name="Stiekema W."/>
            <person name="Entian K.-D."/>
            <person name="Terryn N."/>
            <person name="Harris B."/>
            <person name="Ansorge W."/>
            <person name="Brandt P."/>
            <person name="Grivell L.A."/>
            <person name="Rieger M."/>
            <person name="Weichselgartner M."/>
            <person name="de Simone V."/>
            <person name="Obermaier B."/>
            <person name="Mache R."/>
            <person name="Mueller M."/>
            <person name="Kreis M."/>
            <person name="Delseny M."/>
            <person name="Puigdomenech P."/>
            <person name="Watson M."/>
            <person name="Schmidtheini T."/>
            <person name="Reichert B."/>
            <person name="Portetelle D."/>
            <person name="Perez-Alonso M."/>
            <person name="Boutry M."/>
            <person name="Bancroft I."/>
            <person name="Vos P."/>
            <person name="Hoheisel J."/>
            <person name="Zimmermann W."/>
            <person name="Wedler H."/>
            <person name="Ridley P."/>
            <person name="Langham S.-A."/>
            <person name="McCullagh B."/>
            <person name="Bilham L."/>
            <person name="Robben J."/>
            <person name="van der Schueren J."/>
            <person name="Grymonprez B."/>
            <person name="Chuang Y.-J."/>
            <person name="Vandenbussche F."/>
            <person name="Braeken M."/>
            <person name="Weltjens I."/>
            <person name="Voet M."/>
            <person name="Bastiaens I."/>
            <person name="Aert R."/>
            <person name="Defoor E."/>
            <person name="Weitzenegger T."/>
            <person name="Bothe G."/>
            <person name="Ramsperger U."/>
            <person name="Hilbert H."/>
            <person name="Braun M."/>
            <person name="Holzer E."/>
            <person name="Brandt A."/>
            <person name="Peters S."/>
            <person name="van Staveren M."/>
            <person name="Dirkse W."/>
            <person name="Mooijman P."/>
            <person name="Klein Lankhorst R."/>
            <person name="Rose M."/>
            <person name="Hauf J."/>
            <person name="Koetter P."/>
            <person name="Berneiser S."/>
            <person name="Hempel S."/>
            <person name="Feldpausch M."/>
            <person name="Lamberth S."/>
            <person name="Van den Daele H."/>
            <person name="De Keyser A."/>
            <person name="Buysshaert C."/>
            <person name="Gielen J."/>
            <person name="Villarroel R."/>
            <person name="De Clercq R."/>
            <person name="van Montagu M."/>
            <person name="Rogers J."/>
            <person name="Cronin A."/>
            <person name="Quail M.A."/>
            <person name="Bray-Allen S."/>
            <person name="Clark L."/>
            <person name="Doggett J."/>
            <person name="Hall S."/>
            <person name="Kay M."/>
            <person name="Lennard N."/>
            <person name="McLay K."/>
            <person name="Mayes R."/>
            <person name="Pettett A."/>
            <person name="Rajandream M.A."/>
            <person name="Lyne M."/>
            <person name="Benes V."/>
            <person name="Rechmann S."/>
            <person name="Borkova D."/>
            <person name="Bloecker H."/>
            <person name="Scharfe M."/>
            <person name="Grimm M."/>
            <person name="Loehnert T.-H."/>
            <person name="Dose S."/>
            <person name="de Haan M."/>
            <person name="Maarse A.C."/>
            <person name="Schaefer M."/>
            <person name="Mueller-Auer S."/>
            <person name="Gabel C."/>
            <person name="Fuchs M."/>
            <person name="Fartmann B."/>
            <person name="Granderath K."/>
            <person name="Dauner D."/>
            <person name="Herzl A."/>
            <person name="Neumann S."/>
            <person name="Argiriou A."/>
            <person name="Vitale D."/>
            <person name="Liguori R."/>
            <person name="Piravandi E."/>
            <person name="Massenet O."/>
            <person name="Quigley F."/>
            <person name="Clabauld G."/>
            <person name="Muendlein A."/>
            <person name="Felber R."/>
            <person name="Schnabl S."/>
            <person name="Hiller R."/>
            <person name="Schmidt W."/>
            <person name="Lecharny A."/>
            <person name="Aubourg S."/>
            <person name="Chefdor F."/>
            <person name="Cooke R."/>
            <person name="Berger C."/>
            <person name="Monfort A."/>
            <person name="Casacuberta E."/>
            <person name="Gibbons T."/>
            <person name="Weber N."/>
            <person name="Vandenbol M."/>
            <person name="Bargues M."/>
            <person name="Terol J."/>
            <person name="Torres A."/>
            <person name="Perez-Perez A."/>
            <person name="Purnelle B."/>
            <person name="Bent E."/>
            <person name="Johnson S."/>
            <person name="Tacon D."/>
            <person name="Jesse T."/>
            <person name="Heijnen L."/>
            <person name="Schwarz S."/>
            <person name="Scholler P."/>
            <person name="Heber S."/>
            <person name="Francs P."/>
            <person name="Bielke C."/>
            <person name="Frishman D."/>
            <person name="Haase D."/>
            <person name="Lemcke K."/>
            <person name="Mewes H.-W."/>
            <person name="Stocker S."/>
            <person name="Zaccaria P."/>
            <person name="Bevan M."/>
            <person name="Wilson R.K."/>
            <person name="de la Bastide M."/>
            <person name="Habermann K."/>
            <person name="Parnell L."/>
            <person name="Dedhia N."/>
            <person name="Gnoj L."/>
            <person name="Schutz K."/>
            <person name="Huang E."/>
            <person name="Spiegel L."/>
            <person name="Sekhon M."/>
            <person name="Murray J."/>
            <person name="Sheet P."/>
            <person name="Cordes M."/>
            <person name="Abu-Threideh J."/>
            <person name="Stoneking T."/>
            <person name="Kalicki J."/>
            <person name="Graves T."/>
            <person name="Harmon G."/>
            <person name="Edwards J."/>
            <person name="Latreille P."/>
            <person name="Courtney L."/>
            <person name="Cloud J."/>
            <person name="Abbott A."/>
            <person name="Scott K."/>
            <person name="Johnson D."/>
            <person name="Minx P."/>
            <person name="Bentley D."/>
            <person name="Fulton B."/>
            <person name="Miller N."/>
            <person name="Greco T."/>
            <person name="Kemp K."/>
            <person name="Kramer J."/>
            <person name="Fulton L."/>
            <person name="Mardis E."/>
            <person name="Dante M."/>
            <person name="Pepin K."/>
            <person name="Hillier L.W."/>
            <person name="Nelson J."/>
            <person name="Spieth J."/>
            <person name="Ryan E."/>
            <person name="Andrews S."/>
            <person name="Geisel C."/>
            <person name="Layman D."/>
            <person name="Du H."/>
            <person name="Ali J."/>
            <person name="Berghoff A."/>
            <person name="Jones K."/>
            <person name="Drone K."/>
            <person name="Cotton M."/>
            <person name="Joshu C."/>
            <person name="Antonoiu B."/>
            <person name="Zidanic M."/>
            <person name="Strong C."/>
            <person name="Sun H."/>
            <person name="Lamar B."/>
            <person name="Yordan C."/>
            <person name="Ma P."/>
            <person name="Zhong J."/>
            <person name="Preston R."/>
            <person name="Vil D."/>
            <person name="Shekher M."/>
            <person name="Matero A."/>
            <person name="Shah R."/>
            <person name="Swaby I.K."/>
            <person name="O'Shaughnessy A."/>
            <person name="Rodriguez M."/>
            <person name="Hoffman J."/>
            <person name="Till S."/>
            <person name="Granat S."/>
            <person name="Shohdy N."/>
            <person name="Hasegawa A."/>
            <person name="Hameed A."/>
            <person name="Lodhi M."/>
            <person name="Johnson A."/>
            <person name="Chen E."/>
            <person name="Marra M.A."/>
            <person name="Martienssen R."/>
            <person name="McCombie W.R."/>
        </authorList>
    </citation>
    <scope>NUCLEOTIDE SEQUENCE [LARGE SCALE GENOMIC DNA]</scope>
    <source>
        <strain>cv. Columbia</strain>
    </source>
</reference>
<reference key="2">
    <citation type="journal article" date="2017" name="Plant J.">
        <title>Araport11: a complete reannotation of the Arabidopsis thaliana reference genome.</title>
        <authorList>
            <person name="Cheng C.Y."/>
            <person name="Krishnakumar V."/>
            <person name="Chan A.P."/>
            <person name="Thibaud-Nissen F."/>
            <person name="Schobel S."/>
            <person name="Town C.D."/>
        </authorList>
    </citation>
    <scope>GENOME REANNOTATION</scope>
    <source>
        <strain>cv. Columbia</strain>
    </source>
</reference>
<reference key="3">
    <citation type="journal article" date="2003" name="Science">
        <title>Empirical analysis of transcriptional activity in the Arabidopsis genome.</title>
        <authorList>
            <person name="Yamada K."/>
            <person name="Lim J."/>
            <person name="Dale J.M."/>
            <person name="Chen H."/>
            <person name="Shinn P."/>
            <person name="Palm C.J."/>
            <person name="Southwick A.M."/>
            <person name="Wu H.C."/>
            <person name="Kim C.J."/>
            <person name="Nguyen M."/>
            <person name="Pham P.K."/>
            <person name="Cheuk R.F."/>
            <person name="Karlin-Newmann G."/>
            <person name="Liu S.X."/>
            <person name="Lam B."/>
            <person name="Sakano H."/>
            <person name="Wu T."/>
            <person name="Yu G."/>
            <person name="Miranda M."/>
            <person name="Quach H.L."/>
            <person name="Tripp M."/>
            <person name="Chang C.H."/>
            <person name="Lee J.M."/>
            <person name="Toriumi M.J."/>
            <person name="Chan M.M."/>
            <person name="Tang C.C."/>
            <person name="Onodera C.S."/>
            <person name="Deng J.M."/>
            <person name="Akiyama K."/>
            <person name="Ansari Y."/>
            <person name="Arakawa T."/>
            <person name="Banh J."/>
            <person name="Banno F."/>
            <person name="Bowser L."/>
            <person name="Brooks S.Y."/>
            <person name="Carninci P."/>
            <person name="Chao Q."/>
            <person name="Choy N."/>
            <person name="Enju A."/>
            <person name="Goldsmith A.D."/>
            <person name="Gurjal M."/>
            <person name="Hansen N.F."/>
            <person name="Hayashizaki Y."/>
            <person name="Johnson-Hopson C."/>
            <person name="Hsuan V.W."/>
            <person name="Iida K."/>
            <person name="Karnes M."/>
            <person name="Khan S."/>
            <person name="Koesema E."/>
            <person name="Ishida J."/>
            <person name="Jiang P.X."/>
            <person name="Jones T."/>
            <person name="Kawai J."/>
            <person name="Kamiya A."/>
            <person name="Meyers C."/>
            <person name="Nakajima M."/>
            <person name="Narusaka M."/>
            <person name="Seki M."/>
            <person name="Sakurai T."/>
            <person name="Satou M."/>
            <person name="Tamse R."/>
            <person name="Vaysberg M."/>
            <person name="Wallender E.K."/>
            <person name="Wong C."/>
            <person name="Yamamura Y."/>
            <person name="Yuan S."/>
            <person name="Shinozaki K."/>
            <person name="Davis R.W."/>
            <person name="Theologis A."/>
            <person name="Ecker J.R."/>
        </authorList>
    </citation>
    <scope>NUCLEOTIDE SEQUENCE [LARGE SCALE MRNA]</scope>
    <source>
        <strain>cv. Columbia</strain>
    </source>
</reference>
<reference key="4">
    <citation type="journal article" date="2003" name="J. Biol. Chem.">
        <title>Biochemical diversity among the 1-amino-cyclopropane-1-carboxylate synthase isozymes encoded by the Arabidopsis gene family.</title>
        <authorList>
            <person name="Yamagami T."/>
            <person name="Tsuchisaka A."/>
            <person name="Yamada K."/>
            <person name="Haddon W.F."/>
            <person name="Harden L.A."/>
            <person name="Theologis A."/>
        </authorList>
    </citation>
    <scope>ENZYME ACTIVITY</scope>
    <scope>TISSUE SPECIFICITY</scope>
    <scope>INDUCTION</scope>
    <scope>PUTATIVE PROTEOLYTIC PROCESSING</scope>
</reference>
<reference key="5">
    <citation type="journal article" date="2014" name="Plant Cell">
        <title>The Arabidopsis 14-3-3 protein RARE COLD INDUCIBLE 1A links low-temperature response and ethylene biosynthesis to regulate freezing tolerance and cold acclimation.</title>
        <authorList>
            <person name="Catala R."/>
            <person name="Lopez-Cobollo R."/>
            <person name="Mar Castellano M."/>
            <person name="Angosto T."/>
            <person name="Alonso J.M."/>
            <person name="Ecker J.R."/>
            <person name="Salinas J."/>
        </authorList>
    </citation>
    <scope>INTERACTION WITH GRF3</scope>
</reference>
<organism>
    <name type="scientific">Arabidopsis thaliana</name>
    <name type="common">Mouse-ear cress</name>
    <dbReference type="NCBI Taxonomy" id="3702"/>
    <lineage>
        <taxon>Eukaryota</taxon>
        <taxon>Viridiplantae</taxon>
        <taxon>Streptophyta</taxon>
        <taxon>Embryophyta</taxon>
        <taxon>Tracheophyta</taxon>
        <taxon>Spermatophyta</taxon>
        <taxon>Magnoliopsida</taxon>
        <taxon>eudicotyledons</taxon>
        <taxon>Gunneridae</taxon>
        <taxon>Pentapetalae</taxon>
        <taxon>rosids</taxon>
        <taxon>malvids</taxon>
        <taxon>Brassicales</taxon>
        <taxon>Brassicaceae</taxon>
        <taxon>Camelineae</taxon>
        <taxon>Arabidopsis</taxon>
    </lineage>
</organism>
<name>1A111_ARATH</name>
<keyword id="KW-0266">Ethylene biosynthesis</keyword>
<keyword id="KW-0292">Fruit ripening</keyword>
<keyword id="KW-0456">Lyase</keyword>
<keyword id="KW-0663">Pyridoxal phosphate</keyword>
<keyword id="KW-1185">Reference proteome</keyword>
<keyword id="KW-0949">S-adenosyl-L-methionine</keyword>
<accession>Q9S9U6</accession>
<comment type="function">
    <text>1-aminocyclopropane-1-carboxylate synthase (ACS) enzymes catalyze the conversion of S-adenosyl-L-methionine (SAM) into 1-aminocyclopropane-1-carboxylate (ACC), a direct precursor of ethylene.</text>
</comment>
<comment type="catalytic activity">
    <reaction evidence="2">
        <text>S-adenosyl-L-methionine = 1-aminocyclopropane-1-carboxylate + S-methyl-5'-thioadenosine + H(+)</text>
        <dbReference type="Rhea" id="RHEA:21744"/>
        <dbReference type="ChEBI" id="CHEBI:15378"/>
        <dbReference type="ChEBI" id="CHEBI:17509"/>
        <dbReference type="ChEBI" id="CHEBI:58360"/>
        <dbReference type="ChEBI" id="CHEBI:59789"/>
        <dbReference type="EC" id="4.4.1.14"/>
    </reaction>
</comment>
<comment type="cofactor">
    <cofactor>
        <name>pyridoxal 5'-phosphate</name>
        <dbReference type="ChEBI" id="CHEBI:597326"/>
    </cofactor>
</comment>
<comment type="biophysicochemical properties">
    <kinetics>
        <KM>25 uM for AdoMet</KM>
        <Vmax>25.2 uM/h/mg enzyme</Vmax>
    </kinetics>
    <phDependence>
        <text>Optimum pH is 8.</text>
    </phDependence>
</comment>
<comment type="pathway">
    <text>Alkene biosynthesis; ethylene biosynthesis via S-adenosyl-L-methionine; ethylene from S-adenosyl-L-methionine: step 1/2.</text>
</comment>
<comment type="subunit">
    <text evidence="1 3">Homodimer and heterodimer. In vivo, the relevance of heterodimerization with other ACS enzymes is however unsure (By similarity). Interacts with GRF3.</text>
</comment>
<comment type="tissue specificity">
    <text evidence="2">Expressed in roots.</text>
</comment>
<comment type="induction">
    <text evidence="2">By indole-3-acetic acid (IAA) and cycloheximide (CHX).</text>
</comment>
<comment type="PTM">
    <text>May be processed at its C-terminus.</text>
</comment>
<comment type="miscellaneous">
    <text>The stability of ACS proteins, and the regulation of such stability, play a central role in ethylene biosynthesis.</text>
</comment>
<comment type="similarity">
    <text evidence="4">Belongs to the class-I pyridoxal-phosphate-dependent aminotransferase family.</text>
</comment>
<protein>
    <recommendedName>
        <fullName>1-aminocyclopropane-1-carboxylate synthase 11</fullName>
        <shortName>ACC synthase 11</shortName>
        <ecNumber>4.4.1.14</ecNumber>
    </recommendedName>
    <alternativeName>
        <fullName>S-adenosyl-L-methionine methylthioadenosine-lyase 11</fullName>
    </alternativeName>
</protein>
<proteinExistence type="evidence at protein level"/>
<gene>
    <name type="primary">ACS11</name>
    <name type="ordered locus">At4g08040</name>
    <name type="ORF">T17A2.2</name>
</gene>
<feature type="chain" id="PRO_0000123905" description="1-aminocyclopropane-1-carboxylate synthase 11">
    <location>
        <begin position="1"/>
        <end position="460"/>
    </location>
</feature>
<feature type="binding site" evidence="1">
    <location>
        <position position="45"/>
    </location>
    <ligand>
        <name>substrate</name>
    </ligand>
</feature>
<feature type="binding site" evidence="1">
    <location>
        <position position="83"/>
    </location>
    <ligand>
        <name>substrate</name>
    </ligand>
</feature>
<feature type="modified residue" description="N6-(pyridoxal phosphate)lysine" evidence="1">
    <location>
        <position position="267"/>
    </location>
</feature>
<evidence type="ECO:0000250" key="1"/>
<evidence type="ECO:0000269" key="2">
    <source>
    </source>
</evidence>
<evidence type="ECO:0000269" key="3">
    <source>
    </source>
</evidence>
<evidence type="ECO:0000305" key="4"/>